<reference key="1">
    <citation type="journal article" date="2007" name="PLoS Genet.">
        <title>The complete genome sequence of Yersinia pseudotuberculosis IP31758, the causative agent of Far East scarlet-like fever.</title>
        <authorList>
            <person name="Eppinger M."/>
            <person name="Rosovitz M.J."/>
            <person name="Fricke W.F."/>
            <person name="Rasko D.A."/>
            <person name="Kokorina G."/>
            <person name="Fayolle C."/>
            <person name="Lindler L.E."/>
            <person name="Carniel E."/>
            <person name="Ravel J."/>
        </authorList>
    </citation>
    <scope>NUCLEOTIDE SEQUENCE [LARGE SCALE GENOMIC DNA]</scope>
    <source>
        <strain>IP 31758</strain>
    </source>
</reference>
<organism>
    <name type="scientific">Yersinia pseudotuberculosis serotype O:1b (strain IP 31758)</name>
    <dbReference type="NCBI Taxonomy" id="349747"/>
    <lineage>
        <taxon>Bacteria</taxon>
        <taxon>Pseudomonadati</taxon>
        <taxon>Pseudomonadota</taxon>
        <taxon>Gammaproteobacteria</taxon>
        <taxon>Enterobacterales</taxon>
        <taxon>Yersiniaceae</taxon>
        <taxon>Yersinia</taxon>
    </lineage>
</organism>
<protein>
    <recommendedName>
        <fullName evidence="1">Probable endonuclease 4</fullName>
        <ecNumber evidence="1">3.1.21.2</ecNumber>
    </recommendedName>
    <alternativeName>
        <fullName evidence="1">Endodeoxyribonuclease IV</fullName>
    </alternativeName>
    <alternativeName>
        <fullName evidence="1">Endonuclease IV</fullName>
    </alternativeName>
</protein>
<comment type="function">
    <text evidence="1">Endonuclease IV plays a role in DNA repair. It cleaves phosphodiester bonds at apurinic or apyrimidinic (AP) sites, generating a 3'-hydroxyl group and a 5'-terminal sugar phosphate.</text>
</comment>
<comment type="catalytic activity">
    <reaction evidence="1">
        <text>Endonucleolytic cleavage to 5'-phosphooligonucleotide end-products.</text>
        <dbReference type="EC" id="3.1.21.2"/>
    </reaction>
</comment>
<comment type="cofactor">
    <cofactor evidence="1">
        <name>Zn(2+)</name>
        <dbReference type="ChEBI" id="CHEBI:29105"/>
    </cofactor>
    <text evidence="1">Binds 3 Zn(2+) ions.</text>
</comment>
<comment type="similarity">
    <text evidence="1">Belongs to the AP endonuclease 2 family.</text>
</comment>
<keyword id="KW-0227">DNA damage</keyword>
<keyword id="KW-0234">DNA repair</keyword>
<keyword id="KW-0255">Endonuclease</keyword>
<keyword id="KW-0378">Hydrolase</keyword>
<keyword id="KW-0479">Metal-binding</keyword>
<keyword id="KW-0540">Nuclease</keyword>
<keyword id="KW-0862">Zinc</keyword>
<feature type="chain" id="PRO_1000058179" description="Probable endonuclease 4">
    <location>
        <begin position="1"/>
        <end position="285"/>
    </location>
</feature>
<feature type="binding site" evidence="1">
    <location>
        <position position="69"/>
    </location>
    <ligand>
        <name>Zn(2+)</name>
        <dbReference type="ChEBI" id="CHEBI:29105"/>
        <label>1</label>
    </ligand>
</feature>
<feature type="binding site" evidence="1">
    <location>
        <position position="109"/>
    </location>
    <ligand>
        <name>Zn(2+)</name>
        <dbReference type="ChEBI" id="CHEBI:29105"/>
        <label>1</label>
    </ligand>
</feature>
<feature type="binding site" evidence="1">
    <location>
        <position position="145"/>
    </location>
    <ligand>
        <name>Zn(2+)</name>
        <dbReference type="ChEBI" id="CHEBI:29105"/>
        <label>1</label>
    </ligand>
</feature>
<feature type="binding site" evidence="1">
    <location>
        <position position="145"/>
    </location>
    <ligand>
        <name>Zn(2+)</name>
        <dbReference type="ChEBI" id="CHEBI:29105"/>
        <label>2</label>
    </ligand>
</feature>
<feature type="binding site" evidence="1">
    <location>
        <position position="179"/>
    </location>
    <ligand>
        <name>Zn(2+)</name>
        <dbReference type="ChEBI" id="CHEBI:29105"/>
        <label>2</label>
    </ligand>
</feature>
<feature type="binding site" evidence="1">
    <location>
        <position position="182"/>
    </location>
    <ligand>
        <name>Zn(2+)</name>
        <dbReference type="ChEBI" id="CHEBI:29105"/>
        <label>3</label>
    </ligand>
</feature>
<feature type="binding site" evidence="1">
    <location>
        <position position="216"/>
    </location>
    <ligand>
        <name>Zn(2+)</name>
        <dbReference type="ChEBI" id="CHEBI:29105"/>
        <label>2</label>
    </ligand>
</feature>
<feature type="binding site" evidence="1">
    <location>
        <position position="229"/>
    </location>
    <ligand>
        <name>Zn(2+)</name>
        <dbReference type="ChEBI" id="CHEBI:29105"/>
        <label>3</label>
    </ligand>
</feature>
<feature type="binding site" evidence="1">
    <location>
        <position position="231"/>
    </location>
    <ligand>
        <name>Zn(2+)</name>
        <dbReference type="ChEBI" id="CHEBI:29105"/>
        <label>3</label>
    </ligand>
</feature>
<feature type="binding site" evidence="1">
    <location>
        <position position="261"/>
    </location>
    <ligand>
        <name>Zn(2+)</name>
        <dbReference type="ChEBI" id="CHEBI:29105"/>
        <label>2</label>
    </ligand>
</feature>
<dbReference type="EC" id="3.1.21.2" evidence="1"/>
<dbReference type="EMBL" id="CP000720">
    <property type="protein sequence ID" value="ABS48056.1"/>
    <property type="molecule type" value="Genomic_DNA"/>
</dbReference>
<dbReference type="RefSeq" id="WP_012105407.1">
    <property type="nucleotide sequence ID" value="NC_009708.1"/>
</dbReference>
<dbReference type="SMR" id="A7FK62"/>
<dbReference type="KEGG" id="ypi:YpsIP31758_2675"/>
<dbReference type="HOGENOM" id="CLU_025885_0_4_6"/>
<dbReference type="Proteomes" id="UP000002412">
    <property type="component" value="Chromosome"/>
</dbReference>
<dbReference type="GO" id="GO:0008833">
    <property type="term" value="F:deoxyribonuclease IV (phage-T4-induced) activity"/>
    <property type="evidence" value="ECO:0007669"/>
    <property type="project" value="UniProtKB-UniRule"/>
</dbReference>
<dbReference type="GO" id="GO:0003677">
    <property type="term" value="F:DNA binding"/>
    <property type="evidence" value="ECO:0007669"/>
    <property type="project" value="InterPro"/>
</dbReference>
<dbReference type="GO" id="GO:0003906">
    <property type="term" value="F:DNA-(apurinic or apyrimidinic site) endonuclease activity"/>
    <property type="evidence" value="ECO:0007669"/>
    <property type="project" value="TreeGrafter"/>
</dbReference>
<dbReference type="GO" id="GO:0008081">
    <property type="term" value="F:phosphoric diester hydrolase activity"/>
    <property type="evidence" value="ECO:0007669"/>
    <property type="project" value="TreeGrafter"/>
</dbReference>
<dbReference type="GO" id="GO:0008270">
    <property type="term" value="F:zinc ion binding"/>
    <property type="evidence" value="ECO:0007669"/>
    <property type="project" value="UniProtKB-UniRule"/>
</dbReference>
<dbReference type="GO" id="GO:0006284">
    <property type="term" value="P:base-excision repair"/>
    <property type="evidence" value="ECO:0007669"/>
    <property type="project" value="TreeGrafter"/>
</dbReference>
<dbReference type="CDD" id="cd00019">
    <property type="entry name" value="AP2Ec"/>
    <property type="match status" value="1"/>
</dbReference>
<dbReference type="FunFam" id="3.20.20.150:FF:000001">
    <property type="entry name" value="Probable endonuclease 4"/>
    <property type="match status" value="1"/>
</dbReference>
<dbReference type="Gene3D" id="3.20.20.150">
    <property type="entry name" value="Divalent-metal-dependent TIM barrel enzymes"/>
    <property type="match status" value="1"/>
</dbReference>
<dbReference type="HAMAP" id="MF_00152">
    <property type="entry name" value="Nfo"/>
    <property type="match status" value="1"/>
</dbReference>
<dbReference type="InterPro" id="IPR001719">
    <property type="entry name" value="AP_endonuc_2"/>
</dbReference>
<dbReference type="InterPro" id="IPR018246">
    <property type="entry name" value="AP_endonuc_F2_Zn_BS"/>
</dbReference>
<dbReference type="InterPro" id="IPR036237">
    <property type="entry name" value="Xyl_isomerase-like_sf"/>
</dbReference>
<dbReference type="InterPro" id="IPR013022">
    <property type="entry name" value="Xyl_isomerase-like_TIM-brl"/>
</dbReference>
<dbReference type="NCBIfam" id="TIGR00587">
    <property type="entry name" value="nfo"/>
    <property type="match status" value="1"/>
</dbReference>
<dbReference type="NCBIfam" id="NF002199">
    <property type="entry name" value="PRK01060.1-4"/>
    <property type="match status" value="1"/>
</dbReference>
<dbReference type="PANTHER" id="PTHR21445:SF0">
    <property type="entry name" value="APURINIC-APYRIMIDINIC ENDONUCLEASE"/>
    <property type="match status" value="1"/>
</dbReference>
<dbReference type="PANTHER" id="PTHR21445">
    <property type="entry name" value="ENDONUCLEASE IV ENDODEOXYRIBONUCLEASE IV"/>
    <property type="match status" value="1"/>
</dbReference>
<dbReference type="Pfam" id="PF01261">
    <property type="entry name" value="AP_endonuc_2"/>
    <property type="match status" value="1"/>
</dbReference>
<dbReference type="SMART" id="SM00518">
    <property type="entry name" value="AP2Ec"/>
    <property type="match status" value="1"/>
</dbReference>
<dbReference type="SUPFAM" id="SSF51658">
    <property type="entry name" value="Xylose isomerase-like"/>
    <property type="match status" value="1"/>
</dbReference>
<dbReference type="PROSITE" id="PS00729">
    <property type="entry name" value="AP_NUCLEASE_F2_1"/>
    <property type="match status" value="1"/>
</dbReference>
<dbReference type="PROSITE" id="PS00730">
    <property type="entry name" value="AP_NUCLEASE_F2_2"/>
    <property type="match status" value="1"/>
</dbReference>
<dbReference type="PROSITE" id="PS00731">
    <property type="entry name" value="AP_NUCLEASE_F2_3"/>
    <property type="match status" value="1"/>
</dbReference>
<dbReference type="PROSITE" id="PS51432">
    <property type="entry name" value="AP_NUCLEASE_F2_4"/>
    <property type="match status" value="1"/>
</dbReference>
<evidence type="ECO:0000255" key="1">
    <source>
        <dbReference type="HAMAP-Rule" id="MF_00152"/>
    </source>
</evidence>
<gene>
    <name evidence="1" type="primary">nfo</name>
    <name type="ordered locus">YpsIP31758_2675</name>
</gene>
<accession>A7FK62</accession>
<sequence>MKFVGAHVSAAGGVDQAVIRAHELEATAFALFTKNQRQWRAAPLAEDVIEKFKLTCEKYGYTSAQILPHDSYLINLGHPVTEALEKSREAFIDELVRCQQLGLSLLNFHPGSHLLQIDEDQCLARIAESINIALDATEGVTAVIENTAGQGSNLGFKFEHLAAIIEKVEDKSRVGVCIDTCHAFAAGYDLRTEEDCEHTFAALGKIVGFQYLRGMHLNDAKSEFNSRVDRHHSLGEGNIGKTVFSYIMRDSRFDNIPLILETVNMDIWAEEIAWLKSQTEIEPSL</sequence>
<name>END4_YERP3</name>
<proteinExistence type="inferred from homology"/>